<sequence>MILQVQPAKLIKRYKRFLADIELNCGEETTIHCANTGAMKGCAEPDDTVWYTTSTNTKRKYPFSWEITQSQDDHFICVNTLRANQLVEEALHLDLIKELSGFNELKREVKYGNENSRVDFLATYNNAPDTYIEVKSVTLLESGHGYFPDAVTTRGQKHLRELMDMVAQGHKAVLLFAVLHSGINDISAASHVDPIYAKLLKEARLAGVEIIAYKAGFSLQLGELDVKLVEKIPFIER</sequence>
<feature type="chain" id="PRO_0000340136" description="Sugar fermentation stimulation protein homolog">
    <location>
        <begin position="1"/>
        <end position="237"/>
    </location>
</feature>
<accession>Q47W67</accession>
<organism>
    <name type="scientific">Colwellia psychrerythraea (strain 34H / ATCC BAA-681)</name>
    <name type="common">Vibrio psychroerythus</name>
    <dbReference type="NCBI Taxonomy" id="167879"/>
    <lineage>
        <taxon>Bacteria</taxon>
        <taxon>Pseudomonadati</taxon>
        <taxon>Pseudomonadota</taxon>
        <taxon>Gammaproteobacteria</taxon>
        <taxon>Alteromonadales</taxon>
        <taxon>Colwelliaceae</taxon>
        <taxon>Colwellia</taxon>
    </lineage>
</organism>
<name>SFSA_COLP3</name>
<evidence type="ECO:0000255" key="1">
    <source>
        <dbReference type="HAMAP-Rule" id="MF_00095"/>
    </source>
</evidence>
<dbReference type="EMBL" id="CP000083">
    <property type="protein sequence ID" value="AAZ24523.1"/>
    <property type="molecule type" value="Genomic_DNA"/>
</dbReference>
<dbReference type="RefSeq" id="WP_011045036.1">
    <property type="nucleotide sequence ID" value="NC_003910.7"/>
</dbReference>
<dbReference type="SMR" id="Q47W67"/>
<dbReference type="STRING" id="167879.CPS_4305"/>
<dbReference type="DNASU" id="3519073"/>
<dbReference type="KEGG" id="cps:CPS_4305"/>
<dbReference type="HOGENOM" id="CLU_052299_2_0_6"/>
<dbReference type="Proteomes" id="UP000000547">
    <property type="component" value="Chromosome"/>
</dbReference>
<dbReference type="GO" id="GO:0003677">
    <property type="term" value="F:DNA binding"/>
    <property type="evidence" value="ECO:0007669"/>
    <property type="project" value="InterPro"/>
</dbReference>
<dbReference type="CDD" id="cd22359">
    <property type="entry name" value="SfsA-like_bacterial"/>
    <property type="match status" value="1"/>
</dbReference>
<dbReference type="FunFam" id="2.40.50.580:FF:000001">
    <property type="entry name" value="Sugar fermentation stimulation protein A"/>
    <property type="match status" value="1"/>
</dbReference>
<dbReference type="FunFam" id="3.40.1350.60:FF:000001">
    <property type="entry name" value="Sugar fermentation stimulation protein A"/>
    <property type="match status" value="1"/>
</dbReference>
<dbReference type="Gene3D" id="2.40.50.580">
    <property type="match status" value="1"/>
</dbReference>
<dbReference type="Gene3D" id="3.40.1350.60">
    <property type="match status" value="1"/>
</dbReference>
<dbReference type="HAMAP" id="MF_00095">
    <property type="entry name" value="SfsA"/>
    <property type="match status" value="1"/>
</dbReference>
<dbReference type="InterPro" id="IPR005224">
    <property type="entry name" value="SfsA"/>
</dbReference>
<dbReference type="InterPro" id="IPR040452">
    <property type="entry name" value="SfsA_C"/>
</dbReference>
<dbReference type="InterPro" id="IPR041465">
    <property type="entry name" value="SfsA_N"/>
</dbReference>
<dbReference type="NCBIfam" id="TIGR00230">
    <property type="entry name" value="sfsA"/>
    <property type="match status" value="1"/>
</dbReference>
<dbReference type="PANTHER" id="PTHR30545">
    <property type="entry name" value="SUGAR FERMENTATION STIMULATION PROTEIN A"/>
    <property type="match status" value="1"/>
</dbReference>
<dbReference type="PANTHER" id="PTHR30545:SF2">
    <property type="entry name" value="SUGAR FERMENTATION STIMULATION PROTEIN A"/>
    <property type="match status" value="1"/>
</dbReference>
<dbReference type="Pfam" id="PF03749">
    <property type="entry name" value="SfsA"/>
    <property type="match status" value="1"/>
</dbReference>
<dbReference type="Pfam" id="PF17746">
    <property type="entry name" value="SfsA_N"/>
    <property type="match status" value="1"/>
</dbReference>
<comment type="similarity">
    <text evidence="1">Belongs to the SfsA family.</text>
</comment>
<proteinExistence type="inferred from homology"/>
<reference key="1">
    <citation type="journal article" date="2005" name="Proc. Natl. Acad. Sci. U.S.A.">
        <title>The psychrophilic lifestyle as revealed by the genome sequence of Colwellia psychrerythraea 34H through genomic and proteomic analyses.</title>
        <authorList>
            <person name="Methe B.A."/>
            <person name="Nelson K.E."/>
            <person name="Deming J.W."/>
            <person name="Momen B."/>
            <person name="Melamud E."/>
            <person name="Zhang X."/>
            <person name="Moult J."/>
            <person name="Madupu R."/>
            <person name="Nelson W.C."/>
            <person name="Dodson R.J."/>
            <person name="Brinkac L.M."/>
            <person name="Daugherty S.C."/>
            <person name="Durkin A.S."/>
            <person name="DeBoy R.T."/>
            <person name="Kolonay J.F."/>
            <person name="Sullivan S.A."/>
            <person name="Zhou L."/>
            <person name="Davidsen T.M."/>
            <person name="Wu M."/>
            <person name="Huston A.L."/>
            <person name="Lewis M."/>
            <person name="Weaver B."/>
            <person name="Weidman J.F."/>
            <person name="Khouri H."/>
            <person name="Utterback T.R."/>
            <person name="Feldblyum T.V."/>
            <person name="Fraser C.M."/>
        </authorList>
    </citation>
    <scope>NUCLEOTIDE SEQUENCE [LARGE SCALE GENOMIC DNA]</scope>
    <source>
        <strain>34H / ATCC BAA-681</strain>
    </source>
</reference>
<gene>
    <name evidence="1" type="primary">sfsA</name>
    <name type="ordered locus">CPS_4305</name>
</gene>
<protein>
    <recommendedName>
        <fullName evidence="1">Sugar fermentation stimulation protein homolog</fullName>
    </recommendedName>
</protein>